<name>OMP2A_BRUAB</name>
<evidence type="ECO:0000250" key="1">
    <source>
        <dbReference type="UniProtKB" id="B2SAB9"/>
    </source>
</evidence>
<evidence type="ECO:0000255" key="2"/>
<evidence type="ECO:0000269" key="3">
    <source>
    </source>
</evidence>
<evidence type="ECO:0000305" key="4"/>
<comment type="function">
    <text evidence="3">Forms passive diffusion pores that allow small molecular weight hydrophilic materials across the outer membrane.</text>
</comment>
<comment type="subunit">
    <text evidence="1">Monomer.</text>
</comment>
<comment type="subcellular location">
    <subcellularLocation>
        <location evidence="1">Cell outer membrane</location>
        <topology>Multi-pass membrane protein</topology>
    </subcellularLocation>
</comment>
<comment type="domain">
    <text evidence="1">Consists of 16-stranded beta-barrel sheets, with large surface-exposed loops, that form a transmembrane pore at the center of each barrel. The pore is partially ocluded by a peptide loop that folds into the pore lumen.</text>
</comment>
<comment type="miscellaneous">
    <text evidence="1">The pore formed by Omp2a is larger than the one formed by Omp2b. Omp2b pores have optimal permeability to allow growth and protection against harmful compounds. The larger pore formed by Omp2a may be advantageous for intracellular growth, when the bacterium is competing with the host cell for nutrients whose concentration is particularly low within the phagosome.</text>
</comment>
<comment type="similarity">
    <text evidence="4">Belongs to the alphaproteobacteria porin family.</text>
</comment>
<dbReference type="EMBL" id="U26438">
    <property type="protein sequence ID" value="AAA67783.1"/>
    <property type="molecule type" value="Genomic_DNA"/>
</dbReference>
<dbReference type="EMBL" id="AY008719">
    <property type="protein sequence ID" value="AAG38243.1"/>
    <property type="molecule type" value="Genomic_DNA"/>
</dbReference>
<dbReference type="EMBL" id="AE017223">
    <property type="protein sequence ID" value="AAX74030.1"/>
    <property type="molecule type" value="Genomic_DNA"/>
</dbReference>
<dbReference type="PIR" id="B37050">
    <property type="entry name" value="B37050"/>
</dbReference>
<dbReference type="RefSeq" id="WP_002969883.1">
    <property type="nucleotide sequence ID" value="NC_006932.1"/>
</dbReference>
<dbReference type="SMR" id="Q44620"/>
<dbReference type="EnsemblBacteria" id="AAX74030">
    <property type="protein sequence ID" value="AAX74030"/>
    <property type="gene ID" value="BruAb1_0655"/>
</dbReference>
<dbReference type="KEGG" id="bmb:BruAb1_0655"/>
<dbReference type="HOGENOM" id="CLU_044836_0_0_5"/>
<dbReference type="Proteomes" id="UP000000540">
    <property type="component" value="Chromosome I"/>
</dbReference>
<dbReference type="GO" id="GO:0009279">
    <property type="term" value="C:cell outer membrane"/>
    <property type="evidence" value="ECO:0007669"/>
    <property type="project" value="UniProtKB-SubCell"/>
</dbReference>
<dbReference type="GO" id="GO:0046930">
    <property type="term" value="C:pore complex"/>
    <property type="evidence" value="ECO:0007669"/>
    <property type="project" value="UniProtKB-KW"/>
</dbReference>
<dbReference type="GO" id="GO:0015288">
    <property type="term" value="F:porin activity"/>
    <property type="evidence" value="ECO:0007669"/>
    <property type="project" value="UniProtKB-KW"/>
</dbReference>
<dbReference type="GO" id="GO:0006811">
    <property type="term" value="P:monoatomic ion transport"/>
    <property type="evidence" value="ECO:0007669"/>
    <property type="project" value="UniProtKB-KW"/>
</dbReference>
<dbReference type="InterPro" id="IPR003684">
    <property type="entry name" value="Porin_alphabac"/>
</dbReference>
<dbReference type="Pfam" id="PF02530">
    <property type="entry name" value="Porin_2"/>
    <property type="match status" value="1"/>
</dbReference>
<accession>Q44620</accession>
<accession>Q44667</accession>
<accession>Q57EA4</accession>
<sequence length="321" mass="34535">MNIKSLLLGSAAALVAASGAQAADAIVAPEPEAVEYVRVCDAYGAGYFYIPGTETCLRVHGYVRYDVKGGDDVYSGTDRNGWDKGARFALMFNTNSETELGTLGTYTQLRFNYTSNNSRHDGQYGDFSDDRDVADGGVSTGKIAYTFTGGNGFSAVIALEQGGEDVDNDYTIDGYMPHVVGGLKYAGGWGSIAGVVAYDSVIEEWATKVRGDVNITDRFSVWLQGAYSSAATPNQNYGQWGGDWAVWGGAKFIAPEKATFNLQAAHDDWGKTAVTANVAYQLVPGFTITPEVSYTKFGGEWKDTVAEDNAWGGIVRFQRSF</sequence>
<feature type="signal peptide" evidence="2">
    <location>
        <begin position="1"/>
        <end position="22"/>
    </location>
</feature>
<feature type="chain" id="PRO_5000143210" description="Porin Omp2a">
    <location>
        <begin position="23"/>
        <end position="321"/>
    </location>
</feature>
<feature type="sequence variant" description="In strain: biovar 5.">
    <original>S</original>
    <variation>STGTDLQFAYITLGGFKVGIDESEFHTFTGYLGDVINDDVVAAGSYR</variation>
    <location>
        <position position="139"/>
    </location>
</feature>
<proteinExistence type="evidence at protein level"/>
<reference key="1">
    <citation type="journal article" date="1996" name="Int. J. Syst. Bacteriol.">
        <title>Species-specific sequences at the omp2 locus of Brucella type strains.</title>
        <authorList>
            <person name="Ficht T.A."/>
            <person name="Husseinen H.S."/>
            <person name="Derr J."/>
            <person name="Bearden S.W."/>
        </authorList>
    </citation>
    <scope>NUCLEOTIDE SEQUENCE [GENOMIC DNA]</scope>
    <source>
        <strain>biovar 5</strain>
    </source>
</reference>
<reference key="2">
    <citation type="journal article" date="2001" name="J. Bacteriol.">
        <title>Molecular, antigenic, and functional analyses of Omp2b porin size variants of Brucella spp.</title>
        <authorList>
            <person name="Paquet J.-Y."/>
            <person name="Diaz M.A."/>
            <person name="Genevrois S."/>
            <person name="Grayon M."/>
            <person name="Verger J.-M."/>
            <person name="de Bolle X."/>
            <person name="Lakey J.H."/>
            <person name="Letesson J.-J."/>
            <person name="Cloeckaert A."/>
        </authorList>
    </citation>
    <scope>NUCLEOTIDE SEQUENCE [GENOMIC DNA]</scope>
    <scope>FUNCTION IN PERMEABILITY TO SUGAR</scope>
    <source>
        <strain>45/20</strain>
    </source>
</reference>
<reference key="3">
    <citation type="journal article" date="2005" name="J. Bacteriol.">
        <title>Completion of the genome sequence of Brucella abortus and comparison to the highly similar genomes of Brucella melitensis and Brucella suis.</title>
        <authorList>
            <person name="Halling S.M."/>
            <person name="Peterson-Burch B.D."/>
            <person name="Bricker B.J."/>
            <person name="Zuerner R.L."/>
            <person name="Qing Z."/>
            <person name="Li L.-L."/>
            <person name="Kapur V."/>
            <person name="Alt D.P."/>
            <person name="Olsen S.C."/>
        </authorList>
    </citation>
    <scope>NUCLEOTIDE SEQUENCE [LARGE SCALE GENOMIC DNA]</scope>
    <source>
        <strain>9-941</strain>
    </source>
</reference>
<keyword id="KW-0998">Cell outer membrane</keyword>
<keyword id="KW-0406">Ion transport</keyword>
<keyword id="KW-0472">Membrane</keyword>
<keyword id="KW-0626">Porin</keyword>
<keyword id="KW-0732">Signal</keyword>
<keyword id="KW-0812">Transmembrane</keyword>
<keyword id="KW-1134">Transmembrane beta strand</keyword>
<keyword id="KW-0813">Transport</keyword>
<gene>
    <name type="primary">omp2a</name>
    <name type="ordered locus">BruAb1_0655</name>
</gene>
<organism>
    <name type="scientific">Brucella abortus biovar 1 (strain 9-941)</name>
    <dbReference type="NCBI Taxonomy" id="262698"/>
    <lineage>
        <taxon>Bacteria</taxon>
        <taxon>Pseudomonadati</taxon>
        <taxon>Pseudomonadota</taxon>
        <taxon>Alphaproteobacteria</taxon>
        <taxon>Hyphomicrobiales</taxon>
        <taxon>Brucellaceae</taxon>
        <taxon>Brucella/Ochrobactrum group</taxon>
        <taxon>Brucella</taxon>
    </lineage>
</organism>
<protein>
    <recommendedName>
        <fullName>Porin Omp2a</fullName>
    </recommendedName>
</protein>